<name>Y1568_STRA3</name>
<organism>
    <name type="scientific">Streptococcus agalactiae serotype III (strain NEM316)</name>
    <dbReference type="NCBI Taxonomy" id="211110"/>
    <lineage>
        <taxon>Bacteria</taxon>
        <taxon>Bacillati</taxon>
        <taxon>Bacillota</taxon>
        <taxon>Bacilli</taxon>
        <taxon>Lactobacillales</taxon>
        <taxon>Streptococcaceae</taxon>
        <taxon>Streptococcus</taxon>
    </lineage>
</organism>
<feature type="chain" id="PRO_0000164291" description="UPF0346 protein gbs1568">
    <location>
        <begin position="1"/>
        <end position="71"/>
    </location>
</feature>
<sequence length="71" mass="8511">MRKSFYSWLMTQRNPKSNEPVAILADYAFDETTFPKHSSDFETVSRYLEDEASFSFNLTDFDDIWEDYLNH</sequence>
<reference key="1">
    <citation type="journal article" date="2002" name="Mol. Microbiol.">
        <title>Genome sequence of Streptococcus agalactiae, a pathogen causing invasive neonatal disease.</title>
        <authorList>
            <person name="Glaser P."/>
            <person name="Rusniok C."/>
            <person name="Buchrieser C."/>
            <person name="Chevalier F."/>
            <person name="Frangeul L."/>
            <person name="Msadek T."/>
            <person name="Zouine M."/>
            <person name="Couve E."/>
            <person name="Lalioui L."/>
            <person name="Poyart C."/>
            <person name="Trieu-Cuot P."/>
            <person name="Kunst F."/>
        </authorList>
    </citation>
    <scope>NUCLEOTIDE SEQUENCE [LARGE SCALE GENOMIC DNA]</scope>
    <source>
        <strain>NEM316</strain>
    </source>
</reference>
<proteinExistence type="inferred from homology"/>
<protein>
    <recommendedName>
        <fullName evidence="1">UPF0346 protein gbs1568</fullName>
    </recommendedName>
</protein>
<dbReference type="EMBL" id="AL766852">
    <property type="protein sequence ID" value="CAD47227.1"/>
    <property type="molecule type" value="Genomic_DNA"/>
</dbReference>
<dbReference type="RefSeq" id="WP_001232073.1">
    <property type="nucleotide sequence ID" value="NC_004368.1"/>
</dbReference>
<dbReference type="SMR" id="Q8E435"/>
<dbReference type="KEGG" id="san:gbs1568"/>
<dbReference type="eggNOG" id="COG4479">
    <property type="taxonomic scope" value="Bacteria"/>
</dbReference>
<dbReference type="HOGENOM" id="CLU_177534_1_0_9"/>
<dbReference type="Proteomes" id="UP000000823">
    <property type="component" value="Chromosome"/>
</dbReference>
<dbReference type="Gene3D" id="1.10.150.260">
    <property type="entry name" value="YozE SAM-like"/>
    <property type="match status" value="1"/>
</dbReference>
<dbReference type="HAMAP" id="MF_01538">
    <property type="entry name" value="UPF0346"/>
    <property type="match status" value="1"/>
</dbReference>
<dbReference type="InterPro" id="IPR010673">
    <property type="entry name" value="UPF0346"/>
</dbReference>
<dbReference type="InterPro" id="IPR023089">
    <property type="entry name" value="YozE_SAM-like"/>
</dbReference>
<dbReference type="InterPro" id="IPR036806">
    <property type="entry name" value="YozE_SAM-like_sf"/>
</dbReference>
<dbReference type="NCBIfam" id="NF010193">
    <property type="entry name" value="PRK13672.1"/>
    <property type="match status" value="1"/>
</dbReference>
<dbReference type="Pfam" id="PF06855">
    <property type="entry name" value="YozE_SAM_like"/>
    <property type="match status" value="1"/>
</dbReference>
<dbReference type="PIRSF" id="PIRSF037262">
    <property type="entry name" value="UCP037262"/>
    <property type="match status" value="1"/>
</dbReference>
<dbReference type="SUPFAM" id="SSF140652">
    <property type="entry name" value="YozE-like"/>
    <property type="match status" value="1"/>
</dbReference>
<gene>
    <name type="ordered locus">gbs1568</name>
</gene>
<comment type="similarity">
    <text evidence="1">Belongs to the UPF0346 family.</text>
</comment>
<evidence type="ECO:0000255" key="1">
    <source>
        <dbReference type="HAMAP-Rule" id="MF_01538"/>
    </source>
</evidence>
<accession>Q8E435</accession>